<evidence type="ECO:0000250" key="1"/>
<evidence type="ECO:0000255" key="2"/>
<evidence type="ECO:0000255" key="3">
    <source>
        <dbReference type="PROSITE-ProRule" id="PRU00102"/>
    </source>
</evidence>
<evidence type="ECO:0000255" key="4">
    <source>
        <dbReference type="PROSITE-ProRule" id="PRU00284"/>
    </source>
</evidence>
<evidence type="ECO:0000256" key="5">
    <source>
        <dbReference type="SAM" id="MobiDB-lite"/>
    </source>
</evidence>
<evidence type="ECO:0000305" key="6"/>
<keyword id="KW-1003">Cell membrane</keyword>
<keyword id="KW-0145">Chemotaxis</keyword>
<keyword id="KW-0472">Membrane</keyword>
<keyword id="KW-0488">Methylation</keyword>
<keyword id="KW-1185">Reference proteome</keyword>
<keyword id="KW-0807">Transducer</keyword>
<keyword id="KW-0812">Transmembrane</keyword>
<keyword id="KW-1133">Transmembrane helix</keyword>
<gene>
    <name type="primary">htr7</name>
    <name type="synonym">htpV</name>
    <name type="ordered locus">VNG_1759G</name>
</gene>
<sequence>MSGAAVFVDAVVAPLGDAVGAIGFGAAAALGYRNYRDTDAEAAFWMAFTFASLLGVTWTVSLMLEKAGVATQIFNLATGPLMATTVAVFAIGGTATLAIVEDMEALVEERAQRRQEAEEERAEAERAREKAEQKQAEAERQTAEAESAKQDARERSAEIEQLAADLESQATEVGATLEAASDGDLTARVDATTDNAEIAEVATVVNDMLTTMERTIDEIQGFSTNVTTASREATAGAKEIQDASQTVSESVQEIAAGTDDQREQLESVAEEMDSYSATVEEVAATAQSVADTAADTTDVATAGKQTAEDAIDAIDAVQETMQTTVANVDALEDLTTEIDDIAELISDIAEQTNMLALNANIEAARAGSGGGSNGDGFAVVADEVKELATESQRSAKDIAELIEEVQSQTATTVEEIRVAEQRVNDGAAAVEETVDAFGAVTENIQETTDGVQEISQAMDEQAQRSERVVSSVDDIATISQATADRAENVSAASEEQTASITEVTSSLQSLAAQADTLEDRLNEFRTEATGTAHGEATDAPAGQSD</sequence>
<proteinExistence type="inferred from homology"/>
<protein>
    <recommendedName>
        <fullName>Transducer protein Htr7</fullName>
    </recommendedName>
    <alternativeName>
        <fullName>HTP V</fullName>
    </alternativeName>
</protein>
<dbReference type="EMBL" id="AE004437">
    <property type="protein sequence ID" value="AAG19985.1"/>
    <property type="molecule type" value="Genomic_DNA"/>
</dbReference>
<dbReference type="PIR" id="E84327">
    <property type="entry name" value="E84327"/>
</dbReference>
<dbReference type="RefSeq" id="WP_010903283.1">
    <property type="nucleotide sequence ID" value="NC_002607.1"/>
</dbReference>
<dbReference type="SMR" id="P0DMI5"/>
<dbReference type="STRING" id="64091.VNG_1759G"/>
<dbReference type="PaxDb" id="64091-VNG_1759G"/>
<dbReference type="GeneID" id="89343079"/>
<dbReference type="KEGG" id="hal:VNG_1759G"/>
<dbReference type="PATRIC" id="fig|64091.14.peg.1340"/>
<dbReference type="HOGENOM" id="CLU_000445_107_18_2"/>
<dbReference type="InParanoid" id="P0DMI5"/>
<dbReference type="OrthoDB" id="8523at2157"/>
<dbReference type="PhylomeDB" id="P0DMI5"/>
<dbReference type="Proteomes" id="UP000000554">
    <property type="component" value="Chromosome"/>
</dbReference>
<dbReference type="GO" id="GO:0005886">
    <property type="term" value="C:plasma membrane"/>
    <property type="evidence" value="ECO:0007669"/>
    <property type="project" value="UniProtKB-SubCell"/>
</dbReference>
<dbReference type="GO" id="GO:0004888">
    <property type="term" value="F:transmembrane signaling receptor activity"/>
    <property type="evidence" value="ECO:0007669"/>
    <property type="project" value="InterPro"/>
</dbReference>
<dbReference type="GO" id="GO:0006935">
    <property type="term" value="P:chemotaxis"/>
    <property type="evidence" value="ECO:0000318"/>
    <property type="project" value="GO_Central"/>
</dbReference>
<dbReference type="GO" id="GO:0007165">
    <property type="term" value="P:signal transduction"/>
    <property type="evidence" value="ECO:0007669"/>
    <property type="project" value="UniProtKB-KW"/>
</dbReference>
<dbReference type="CDD" id="cd11386">
    <property type="entry name" value="MCP_signal"/>
    <property type="match status" value="1"/>
</dbReference>
<dbReference type="Gene3D" id="1.10.287.950">
    <property type="entry name" value="Methyl-accepting chemotaxis protein"/>
    <property type="match status" value="1"/>
</dbReference>
<dbReference type="InterPro" id="IPR004090">
    <property type="entry name" value="Chemotax_Me-accpt_rcpt"/>
</dbReference>
<dbReference type="InterPro" id="IPR003660">
    <property type="entry name" value="HAMP_dom"/>
</dbReference>
<dbReference type="InterPro" id="IPR004089">
    <property type="entry name" value="MCPsignal_dom"/>
</dbReference>
<dbReference type="PANTHER" id="PTHR32089:SF112">
    <property type="entry name" value="LYSOZYME-LIKE PROTEIN-RELATED"/>
    <property type="match status" value="1"/>
</dbReference>
<dbReference type="PANTHER" id="PTHR32089">
    <property type="entry name" value="METHYL-ACCEPTING CHEMOTAXIS PROTEIN MCPB"/>
    <property type="match status" value="1"/>
</dbReference>
<dbReference type="Pfam" id="PF00015">
    <property type="entry name" value="MCPsignal"/>
    <property type="match status" value="1"/>
</dbReference>
<dbReference type="PRINTS" id="PR00260">
    <property type="entry name" value="CHEMTRNSDUCR"/>
</dbReference>
<dbReference type="SMART" id="SM00304">
    <property type="entry name" value="HAMP"/>
    <property type="match status" value="1"/>
</dbReference>
<dbReference type="SMART" id="SM00283">
    <property type="entry name" value="MA"/>
    <property type="match status" value="1"/>
</dbReference>
<dbReference type="SUPFAM" id="SSF58104">
    <property type="entry name" value="Methyl-accepting chemotaxis protein (MCP) signaling domain"/>
    <property type="match status" value="1"/>
</dbReference>
<dbReference type="PROSITE" id="PS50111">
    <property type="entry name" value="CHEMOTAXIS_TRANSDUC_2"/>
    <property type="match status" value="1"/>
</dbReference>
<dbReference type="PROSITE" id="PS50885">
    <property type="entry name" value="HAMP"/>
    <property type="match status" value="1"/>
</dbReference>
<organism>
    <name type="scientific">Halobacterium salinarum (strain ATCC 700922 / JCM 11081 / NRC-1)</name>
    <name type="common">Halobacterium halobium</name>
    <dbReference type="NCBI Taxonomy" id="64091"/>
    <lineage>
        <taxon>Archaea</taxon>
        <taxon>Methanobacteriati</taxon>
        <taxon>Methanobacteriota</taxon>
        <taxon>Stenosarchaea group</taxon>
        <taxon>Halobacteria</taxon>
        <taxon>Halobacteriales</taxon>
        <taxon>Halobacteriaceae</taxon>
        <taxon>Halobacterium</taxon>
        <taxon>Halobacterium salinarum NRC-34001</taxon>
    </lineage>
</organism>
<name>HTR7_HALSA</name>
<reference key="1">
    <citation type="journal article" date="2000" name="Proc. Natl. Acad. Sci. U.S.A.">
        <title>Genome sequence of Halobacterium species NRC-1.</title>
        <authorList>
            <person name="Ng W.V."/>
            <person name="Kennedy S.P."/>
            <person name="Mahairas G.G."/>
            <person name="Berquist B."/>
            <person name="Pan M."/>
            <person name="Shukla H.D."/>
            <person name="Lasky S.R."/>
            <person name="Baliga N.S."/>
            <person name="Thorsson V."/>
            <person name="Sbrogna J."/>
            <person name="Swartzell S."/>
            <person name="Weir D."/>
            <person name="Hall J."/>
            <person name="Dahl T.A."/>
            <person name="Welti R."/>
            <person name="Goo Y.A."/>
            <person name="Leithauser B."/>
            <person name="Keller K."/>
            <person name="Cruz R."/>
            <person name="Danson M.J."/>
            <person name="Hough D.W."/>
            <person name="Maddocks D.G."/>
            <person name="Jablonski P.E."/>
            <person name="Krebs M.P."/>
            <person name="Angevine C.M."/>
            <person name="Dale H."/>
            <person name="Isenbarger T.A."/>
            <person name="Peck R.F."/>
            <person name="Pohlschroder M."/>
            <person name="Spudich J.L."/>
            <person name="Jung K.-H."/>
            <person name="Alam M."/>
            <person name="Freitas T."/>
            <person name="Hou S."/>
            <person name="Daniels C.J."/>
            <person name="Dennis P.P."/>
            <person name="Omer A.D."/>
            <person name="Ebhardt H."/>
            <person name="Lowe T.M."/>
            <person name="Liang P."/>
            <person name="Riley M."/>
            <person name="Hood L."/>
            <person name="DasSarma S."/>
        </authorList>
    </citation>
    <scope>NUCLEOTIDE SEQUENCE [LARGE SCALE GENOMIC DNA]</scope>
    <source>
        <strain>ATCC 700922 / JCM 11081 / NRC-1</strain>
    </source>
</reference>
<accession>P0DMI5</accession>
<accession>Q48318</accession>
<accession>Q9HP85</accession>
<comment type="function">
    <text evidence="1">Potentially involved in chemo- or phototactic signal transduction.</text>
</comment>
<comment type="subcellular location">
    <subcellularLocation>
        <location evidence="6">Cell membrane</location>
        <topology evidence="6">Multi-pass membrane protein</topology>
    </subcellularLocation>
</comment>
<comment type="PTM">
    <text evidence="1">Methylated by CheR.</text>
</comment>
<comment type="similarity">
    <text evidence="6">Belongs to the methyl-accepting chemotaxis (MCP) protein family.</text>
</comment>
<feature type="chain" id="PRO_0000110552" description="Transducer protein Htr7">
    <location>
        <begin position="1"/>
        <end position="545"/>
    </location>
</feature>
<feature type="transmembrane region" description="Helical" evidence="2">
    <location>
        <begin position="10"/>
        <end position="30"/>
    </location>
</feature>
<feature type="transmembrane region" description="Helical" evidence="2">
    <location>
        <begin position="44"/>
        <end position="64"/>
    </location>
</feature>
<feature type="transmembrane region" description="Helical" evidence="2">
    <location>
        <begin position="80"/>
        <end position="100"/>
    </location>
</feature>
<feature type="domain" description="HAMP" evidence="3">
    <location>
        <begin position="164"/>
        <end position="217"/>
    </location>
</feature>
<feature type="domain" description="Methyl-accepting transducer" evidence="4">
    <location>
        <begin position="236"/>
        <end position="476"/>
    </location>
</feature>
<feature type="region of interest" description="Disordered" evidence="5">
    <location>
        <begin position="111"/>
        <end position="157"/>
    </location>
</feature>
<feature type="region of interest" description="Disordered" evidence="5">
    <location>
        <begin position="521"/>
        <end position="545"/>
    </location>
</feature>
<feature type="compositionally biased region" description="Basic and acidic residues" evidence="5">
    <location>
        <begin position="123"/>
        <end position="157"/>
    </location>
</feature>
<feature type="compositionally biased region" description="Low complexity" evidence="5">
    <location>
        <begin position="527"/>
        <end position="539"/>
    </location>
</feature>
<feature type="modified residue" description="Glutamate methyl ester (Glu)" evidence="1">
    <location>
        <position position="281"/>
    </location>
</feature>